<sequence>MNSLFLINESFTNGYISSVLDIISILAIFCGISVIVNKNPIISVLFLIGLFASVSSYLILLGLSFIGLAYLIVYIGAISILFLFILMLINIRISELQSNTNNSIPLTIILGISLSYSLFQLLPYDIAILSNFSSNINNNLYNLSMNKQNNGNFGINTTPAVSLQPKNNDLLFVTSKIWDGNLAESNHITTIGNVMYSNYSIWLFLASFILLLAMVGSIVIIMKSNASWGGALPNTRETKTEGR</sequence>
<proteinExistence type="inferred from homology"/>
<reference key="1">
    <citation type="journal article" date="2003" name="Nature">
        <title>The genome sequence of the filamentous fungus Neurospora crassa.</title>
        <authorList>
            <person name="Galagan J.E."/>
            <person name="Calvo S.E."/>
            <person name="Borkovich K.A."/>
            <person name="Selker E.U."/>
            <person name="Read N.D."/>
            <person name="Jaffe D.B."/>
            <person name="FitzHugh W."/>
            <person name="Ma L.-J."/>
            <person name="Smirnov S."/>
            <person name="Purcell S."/>
            <person name="Rehman B."/>
            <person name="Elkins T."/>
            <person name="Engels R."/>
            <person name="Wang S."/>
            <person name="Nielsen C.B."/>
            <person name="Butler J."/>
            <person name="Endrizzi M."/>
            <person name="Qui D."/>
            <person name="Ianakiev P."/>
            <person name="Bell-Pedersen D."/>
            <person name="Nelson M.A."/>
            <person name="Werner-Washburne M."/>
            <person name="Selitrennikoff C.P."/>
            <person name="Kinsey J.A."/>
            <person name="Braun E.L."/>
            <person name="Zelter A."/>
            <person name="Schulte U."/>
            <person name="Kothe G.O."/>
            <person name="Jedd G."/>
            <person name="Mewes H.-W."/>
            <person name="Staben C."/>
            <person name="Marcotte E."/>
            <person name="Greenberg D."/>
            <person name="Roy A."/>
            <person name="Foley K."/>
            <person name="Naylor J."/>
            <person name="Stange-Thomann N."/>
            <person name="Barrett R."/>
            <person name="Gnerre S."/>
            <person name="Kamal M."/>
            <person name="Kamvysselis M."/>
            <person name="Mauceli E.W."/>
            <person name="Bielke C."/>
            <person name="Rudd S."/>
            <person name="Frishman D."/>
            <person name="Krystofova S."/>
            <person name="Rasmussen C."/>
            <person name="Metzenberg R.L."/>
            <person name="Perkins D.D."/>
            <person name="Kroken S."/>
            <person name="Cogoni C."/>
            <person name="Macino G."/>
            <person name="Catcheside D.E.A."/>
            <person name="Li W."/>
            <person name="Pratt R.J."/>
            <person name="Osmani S.A."/>
            <person name="DeSouza C.P.C."/>
            <person name="Glass N.L."/>
            <person name="Orbach M.J."/>
            <person name="Berglund J.A."/>
            <person name="Voelker R."/>
            <person name="Yarden O."/>
            <person name="Plamann M."/>
            <person name="Seiler S."/>
            <person name="Dunlap J.C."/>
            <person name="Radford A."/>
            <person name="Aramayo R."/>
            <person name="Natvig D.O."/>
            <person name="Alex L.A."/>
            <person name="Mannhaupt G."/>
            <person name="Ebbole D.J."/>
            <person name="Freitag M."/>
            <person name="Paulsen I."/>
            <person name="Sachs M.S."/>
            <person name="Lander E.S."/>
            <person name="Nusbaum C."/>
            <person name="Birren B.W."/>
        </authorList>
    </citation>
    <scope>NUCLEOTIDE SEQUENCE [LARGE SCALE GENOMIC DNA]</scope>
    <source>
        <strain>ATCC 24698 / 74-OR23-1A / CBS 708.71 / DSM 1257 / FGSC 987</strain>
    </source>
</reference>
<reference key="2">
    <citation type="book" date="2004" name="The Mycota II, Genetics and Biotechnology (2nd edition)">
        <title>Mitochondrial genetics of Neurospora.</title>
        <editorList>
            <person name="Kueck U."/>
        </editorList>
        <authorList>
            <person name="Kennell J.C."/>
            <person name="Collins R.A."/>
            <person name="Griffiths A.J.F."/>
            <person name="Nargang F.E."/>
        </authorList>
    </citation>
    <scope>GENOME REANNOTATION</scope>
    <source>
        <strain>ATCC 24698 / 74-OR23-1A / CBS 708.71 / DSM 1257 / FGSC 987</strain>
    </source>
</reference>
<gene>
    <name type="primary">ndh-6</name>
    <name type="synonym">ND6</name>
    <name type="ORF">NCU16004</name>
</gene>
<protein>
    <recommendedName>
        <fullName>NADH-ubiquinone oxidoreductase chain 6</fullName>
        <ecNumber>7.1.1.2</ecNumber>
    </recommendedName>
    <alternativeName>
        <fullName>NADH dehydrogenase subunit 6</fullName>
    </alternativeName>
</protein>
<accession>P0CY45</accession>
<accession>M1QL54</accession>
<dbReference type="EC" id="7.1.1.2"/>
<dbReference type="EMBL" id="KC683708">
    <property type="protein sequence ID" value="AGG15993.1"/>
    <property type="molecule type" value="Genomic_DNA"/>
</dbReference>
<dbReference type="RefSeq" id="YP_009126705.1">
    <property type="nucleotide sequence ID" value="NC_026614.1"/>
</dbReference>
<dbReference type="SMR" id="P0CY45"/>
<dbReference type="STRING" id="367110.P0CY45"/>
<dbReference type="EnsemblFungi" id="AGG15993">
    <property type="protein sequence ID" value="AGG15993"/>
    <property type="gene ID" value="NCU16004"/>
</dbReference>
<dbReference type="GeneID" id="23681540"/>
<dbReference type="KEGG" id="ncr:NCU16004"/>
<dbReference type="VEuPathDB" id="FungiDB:NCU16004"/>
<dbReference type="InParanoid" id="P0CY45"/>
<dbReference type="OrthoDB" id="10050457at2759"/>
<dbReference type="Proteomes" id="UP000001805">
    <property type="component" value="Mitochondrion"/>
</dbReference>
<dbReference type="GO" id="GO:0031966">
    <property type="term" value="C:mitochondrial membrane"/>
    <property type="evidence" value="ECO:0007669"/>
    <property type="project" value="UniProtKB-SubCell"/>
</dbReference>
<dbReference type="GO" id="GO:0008137">
    <property type="term" value="F:NADH dehydrogenase (ubiquinone) activity"/>
    <property type="evidence" value="ECO:0007669"/>
    <property type="project" value="UniProtKB-EC"/>
</dbReference>
<dbReference type="FunFam" id="1.20.120.1200:FF:000008">
    <property type="entry name" value="NADH-ubiquinone oxidoreductase chain 6"/>
    <property type="match status" value="1"/>
</dbReference>
<dbReference type="Gene3D" id="1.20.120.1200">
    <property type="entry name" value="NADH-ubiquinone/plastoquinone oxidoreductase chain 6, subunit NuoJ"/>
    <property type="match status" value="1"/>
</dbReference>
<dbReference type="InterPro" id="IPR001457">
    <property type="entry name" value="NADH_UbQ/plastoQ_OxRdtase_su6"/>
</dbReference>
<dbReference type="InterPro" id="IPR042106">
    <property type="entry name" value="Nuo/plastoQ_OxRdtase_6_NuoJ"/>
</dbReference>
<dbReference type="PANTHER" id="PTHR33269">
    <property type="entry name" value="NADH-UBIQUINONE OXIDOREDUCTASE CHAIN 6"/>
    <property type="match status" value="1"/>
</dbReference>
<dbReference type="PANTHER" id="PTHR33269:SF17">
    <property type="entry name" value="NADH-UBIQUINONE OXIDOREDUCTASE CHAIN 6"/>
    <property type="match status" value="1"/>
</dbReference>
<dbReference type="Pfam" id="PF00499">
    <property type="entry name" value="Oxidored_q3"/>
    <property type="match status" value="1"/>
</dbReference>
<comment type="function">
    <text evidence="1">Core subunit of the mitochondrial membrane respiratory chain NADH dehydrogenase (Complex I) that is believed to belong to the minimal assembly required for catalysis. Complex I functions in the transfer of electrons from NADH to the respiratory chain. The immediate electron acceptor for the enzyme is believed to be ubiquinone (By similarity).</text>
</comment>
<comment type="catalytic activity">
    <reaction>
        <text>a ubiquinone + NADH + 5 H(+)(in) = a ubiquinol + NAD(+) + 4 H(+)(out)</text>
        <dbReference type="Rhea" id="RHEA:29091"/>
        <dbReference type="Rhea" id="RHEA-COMP:9565"/>
        <dbReference type="Rhea" id="RHEA-COMP:9566"/>
        <dbReference type="ChEBI" id="CHEBI:15378"/>
        <dbReference type="ChEBI" id="CHEBI:16389"/>
        <dbReference type="ChEBI" id="CHEBI:17976"/>
        <dbReference type="ChEBI" id="CHEBI:57540"/>
        <dbReference type="ChEBI" id="CHEBI:57945"/>
        <dbReference type="EC" id="7.1.1.2"/>
    </reaction>
</comment>
<comment type="subcellular location">
    <subcellularLocation>
        <location evidence="3">Mitochondrion membrane</location>
        <topology evidence="3">Multi-pass membrane protein</topology>
    </subcellularLocation>
</comment>
<comment type="similarity">
    <text evidence="3">Belongs to the complex I subunit 6 family.</text>
</comment>
<organism>
    <name type="scientific">Neurospora crassa (strain ATCC 24698 / 74-OR23-1A / CBS 708.71 / DSM 1257 / FGSC 987)</name>
    <dbReference type="NCBI Taxonomy" id="367110"/>
    <lineage>
        <taxon>Eukaryota</taxon>
        <taxon>Fungi</taxon>
        <taxon>Dikarya</taxon>
        <taxon>Ascomycota</taxon>
        <taxon>Pezizomycotina</taxon>
        <taxon>Sordariomycetes</taxon>
        <taxon>Sordariomycetidae</taxon>
        <taxon>Sordariales</taxon>
        <taxon>Sordariaceae</taxon>
        <taxon>Neurospora</taxon>
    </lineage>
</organism>
<keyword id="KW-0249">Electron transport</keyword>
<keyword id="KW-0472">Membrane</keyword>
<keyword id="KW-0496">Mitochondrion</keyword>
<keyword id="KW-0520">NAD</keyword>
<keyword id="KW-1185">Reference proteome</keyword>
<keyword id="KW-0679">Respiratory chain</keyword>
<keyword id="KW-1278">Translocase</keyword>
<keyword id="KW-0812">Transmembrane</keyword>
<keyword id="KW-1133">Transmembrane helix</keyword>
<keyword id="KW-0813">Transport</keyword>
<keyword id="KW-0830">Ubiquinone</keyword>
<geneLocation type="mitochondrion"/>
<name>NU6M_NEUCR</name>
<feature type="chain" id="PRO_0000414729" description="NADH-ubiquinone oxidoreductase chain 6">
    <location>
        <begin position="1"/>
        <end position="243"/>
    </location>
</feature>
<feature type="transmembrane region" description="Helical" evidence="2">
    <location>
        <begin position="16"/>
        <end position="36"/>
    </location>
</feature>
<feature type="transmembrane region" description="Helical" evidence="2">
    <location>
        <begin position="41"/>
        <end position="61"/>
    </location>
</feature>
<feature type="transmembrane region" description="Helical" evidence="2">
    <location>
        <begin position="69"/>
        <end position="89"/>
    </location>
</feature>
<feature type="transmembrane region" description="Helical" evidence="2">
    <location>
        <begin position="104"/>
        <end position="124"/>
    </location>
</feature>
<feature type="transmembrane region" description="Helical" evidence="2">
    <location>
        <begin position="201"/>
        <end position="221"/>
    </location>
</feature>
<evidence type="ECO:0000250" key="1"/>
<evidence type="ECO:0000255" key="2"/>
<evidence type="ECO:0000305" key="3"/>